<gene>
    <name evidence="1" type="primary">trmB</name>
    <name type="ordered locus">Cbei_0833</name>
</gene>
<feature type="chain" id="PRO_1000084438" description="tRNA (guanine-N(7)-)-methyltransferase">
    <location>
        <begin position="1"/>
        <end position="219"/>
    </location>
</feature>
<feature type="binding site" evidence="1">
    <location>
        <position position="43"/>
    </location>
    <ligand>
        <name>S-adenosyl-L-methionine</name>
        <dbReference type="ChEBI" id="CHEBI:59789"/>
    </ligand>
</feature>
<feature type="binding site" evidence="1">
    <location>
        <position position="68"/>
    </location>
    <ligand>
        <name>S-adenosyl-L-methionine</name>
        <dbReference type="ChEBI" id="CHEBI:59789"/>
    </ligand>
</feature>
<feature type="binding site" evidence="1">
    <location>
        <position position="101"/>
    </location>
    <ligand>
        <name>S-adenosyl-L-methionine</name>
        <dbReference type="ChEBI" id="CHEBI:59789"/>
    </ligand>
</feature>
<feature type="binding site" evidence="1">
    <location>
        <position position="124"/>
    </location>
    <ligand>
        <name>S-adenosyl-L-methionine</name>
        <dbReference type="ChEBI" id="CHEBI:59789"/>
    </ligand>
</feature>
<feature type="binding site" evidence="1">
    <location>
        <position position="128"/>
    </location>
    <ligand>
        <name>substrate</name>
    </ligand>
</feature>
<feature type="binding site" evidence="1">
    <location>
        <position position="160"/>
    </location>
    <ligand>
        <name>substrate</name>
    </ligand>
</feature>
<dbReference type="EC" id="2.1.1.33" evidence="1"/>
<dbReference type="EMBL" id="CP000721">
    <property type="protein sequence ID" value="ABR33017.1"/>
    <property type="molecule type" value="Genomic_DNA"/>
</dbReference>
<dbReference type="RefSeq" id="WP_011968177.1">
    <property type="nucleotide sequence ID" value="NC_009617.1"/>
</dbReference>
<dbReference type="SMR" id="A6LRN7"/>
<dbReference type="GeneID" id="66343774"/>
<dbReference type="KEGG" id="cbe:Cbei_0833"/>
<dbReference type="eggNOG" id="COG0220">
    <property type="taxonomic scope" value="Bacteria"/>
</dbReference>
<dbReference type="HOGENOM" id="CLU_050910_2_1_9"/>
<dbReference type="UniPathway" id="UPA00989"/>
<dbReference type="Proteomes" id="UP000000565">
    <property type="component" value="Chromosome"/>
</dbReference>
<dbReference type="GO" id="GO:0043527">
    <property type="term" value="C:tRNA methyltransferase complex"/>
    <property type="evidence" value="ECO:0007669"/>
    <property type="project" value="TreeGrafter"/>
</dbReference>
<dbReference type="GO" id="GO:0008176">
    <property type="term" value="F:tRNA (guanine(46)-N7)-methyltransferase activity"/>
    <property type="evidence" value="ECO:0007669"/>
    <property type="project" value="UniProtKB-UniRule"/>
</dbReference>
<dbReference type="CDD" id="cd02440">
    <property type="entry name" value="AdoMet_MTases"/>
    <property type="match status" value="1"/>
</dbReference>
<dbReference type="Gene3D" id="3.40.50.150">
    <property type="entry name" value="Vaccinia Virus protein VP39"/>
    <property type="match status" value="1"/>
</dbReference>
<dbReference type="HAMAP" id="MF_01057">
    <property type="entry name" value="tRNA_methyltr_TrmB"/>
    <property type="match status" value="1"/>
</dbReference>
<dbReference type="InterPro" id="IPR029063">
    <property type="entry name" value="SAM-dependent_MTases_sf"/>
</dbReference>
<dbReference type="InterPro" id="IPR003358">
    <property type="entry name" value="tRNA_(Gua-N-7)_MeTrfase_Trmb"/>
</dbReference>
<dbReference type="InterPro" id="IPR055361">
    <property type="entry name" value="tRNA_methyltr_TrmB_bact"/>
</dbReference>
<dbReference type="NCBIfam" id="NF001080">
    <property type="entry name" value="PRK00121.2-2"/>
    <property type="match status" value="1"/>
</dbReference>
<dbReference type="NCBIfam" id="TIGR00091">
    <property type="entry name" value="tRNA (guanosine(46)-N7)-methyltransferase TrmB"/>
    <property type="match status" value="1"/>
</dbReference>
<dbReference type="PANTHER" id="PTHR23417">
    <property type="entry name" value="3-DEOXY-D-MANNO-OCTULOSONIC-ACID TRANSFERASE/TRNA GUANINE-N 7 - -METHYLTRANSFERASE"/>
    <property type="match status" value="1"/>
</dbReference>
<dbReference type="PANTHER" id="PTHR23417:SF14">
    <property type="entry name" value="PENTACOTRIPEPTIDE-REPEAT REGION OF PRORP DOMAIN-CONTAINING PROTEIN"/>
    <property type="match status" value="1"/>
</dbReference>
<dbReference type="Pfam" id="PF02390">
    <property type="entry name" value="Methyltransf_4"/>
    <property type="match status" value="1"/>
</dbReference>
<dbReference type="SUPFAM" id="SSF53335">
    <property type="entry name" value="S-adenosyl-L-methionine-dependent methyltransferases"/>
    <property type="match status" value="1"/>
</dbReference>
<dbReference type="PROSITE" id="PS51625">
    <property type="entry name" value="SAM_MT_TRMB"/>
    <property type="match status" value="1"/>
</dbReference>
<reference key="1">
    <citation type="submission" date="2007-06" db="EMBL/GenBank/DDBJ databases">
        <title>Complete sequence of Clostridium beijerinckii NCIMB 8052.</title>
        <authorList>
            <consortium name="US DOE Joint Genome Institute"/>
            <person name="Copeland A."/>
            <person name="Lucas S."/>
            <person name="Lapidus A."/>
            <person name="Barry K."/>
            <person name="Detter J.C."/>
            <person name="Glavina del Rio T."/>
            <person name="Hammon N."/>
            <person name="Israni S."/>
            <person name="Dalin E."/>
            <person name="Tice H."/>
            <person name="Pitluck S."/>
            <person name="Sims D."/>
            <person name="Brettin T."/>
            <person name="Bruce D."/>
            <person name="Tapia R."/>
            <person name="Brainard J."/>
            <person name="Schmutz J."/>
            <person name="Larimer F."/>
            <person name="Land M."/>
            <person name="Hauser L."/>
            <person name="Kyrpides N."/>
            <person name="Mikhailova N."/>
            <person name="Bennet G."/>
            <person name="Cann I."/>
            <person name="Chen J.-S."/>
            <person name="Contreras A.L."/>
            <person name="Jones D."/>
            <person name="Kashket E."/>
            <person name="Mitchell W."/>
            <person name="Stoddard S."/>
            <person name="Schwarz W."/>
            <person name="Qureshi N."/>
            <person name="Young M."/>
            <person name="Shi Z."/>
            <person name="Ezeji T."/>
            <person name="White B."/>
            <person name="Blaschek H."/>
            <person name="Richardson P."/>
        </authorList>
    </citation>
    <scope>NUCLEOTIDE SEQUENCE [LARGE SCALE GENOMIC DNA]</scope>
    <source>
        <strain>ATCC 51743 / NCIMB 8052</strain>
    </source>
</reference>
<keyword id="KW-0489">Methyltransferase</keyword>
<keyword id="KW-0949">S-adenosyl-L-methionine</keyword>
<keyword id="KW-0808">Transferase</keyword>
<keyword id="KW-0819">tRNA processing</keyword>
<protein>
    <recommendedName>
        <fullName evidence="1">tRNA (guanine-N(7)-)-methyltransferase</fullName>
        <ecNumber evidence="1">2.1.1.33</ecNumber>
    </recommendedName>
    <alternativeName>
        <fullName evidence="1">tRNA (guanine(46)-N(7))-methyltransferase</fullName>
    </alternativeName>
    <alternativeName>
        <fullName evidence="1">tRNA(m7G46)-methyltransferase</fullName>
    </alternativeName>
</protein>
<organism>
    <name type="scientific">Clostridium beijerinckii (strain ATCC 51743 / NCIMB 8052)</name>
    <name type="common">Clostridium acetobutylicum</name>
    <dbReference type="NCBI Taxonomy" id="290402"/>
    <lineage>
        <taxon>Bacteria</taxon>
        <taxon>Bacillati</taxon>
        <taxon>Bacillota</taxon>
        <taxon>Clostridia</taxon>
        <taxon>Eubacteriales</taxon>
        <taxon>Clostridiaceae</taxon>
        <taxon>Clostridium</taxon>
    </lineage>
</organism>
<sequence>MRMRKKPWARPELEGCDFFVINPKEYKGKWKEFFGNDKPIYLELGCGKGTFMAVHASENPDINYIAIDIKDEVLGLAKRNIEKAYEEKNRKTDNVKLMAQEIGLISEILSEEDVVSRIYINFCNPWPKEKHKKRRLTHMRQLEQYKTFLKSEGEIYFKTDDDELFEESLEYFNEAGFRIKYITYDLHNSDVEGNVQTEHEKMFSEQGIKIKFLIAMKDN</sequence>
<proteinExistence type="inferred from homology"/>
<accession>A6LRN7</accession>
<evidence type="ECO:0000255" key="1">
    <source>
        <dbReference type="HAMAP-Rule" id="MF_01057"/>
    </source>
</evidence>
<comment type="function">
    <text evidence="1">Catalyzes the formation of N(7)-methylguanine at position 46 (m7G46) in tRNA.</text>
</comment>
<comment type="catalytic activity">
    <reaction evidence="1">
        <text>guanosine(46) in tRNA + S-adenosyl-L-methionine = N(7)-methylguanosine(46) in tRNA + S-adenosyl-L-homocysteine</text>
        <dbReference type="Rhea" id="RHEA:42708"/>
        <dbReference type="Rhea" id="RHEA-COMP:10188"/>
        <dbReference type="Rhea" id="RHEA-COMP:10189"/>
        <dbReference type="ChEBI" id="CHEBI:57856"/>
        <dbReference type="ChEBI" id="CHEBI:59789"/>
        <dbReference type="ChEBI" id="CHEBI:74269"/>
        <dbReference type="ChEBI" id="CHEBI:74480"/>
        <dbReference type="EC" id="2.1.1.33"/>
    </reaction>
</comment>
<comment type="pathway">
    <text evidence="1">tRNA modification; N(7)-methylguanine-tRNA biosynthesis.</text>
</comment>
<comment type="similarity">
    <text evidence="1">Belongs to the class I-like SAM-binding methyltransferase superfamily. TrmB family.</text>
</comment>
<name>TRMB_CLOB8</name>